<gene>
    <name evidence="1" type="primary">pdxH</name>
    <name type="ordered locus">VC_A1079</name>
</gene>
<name>PDXH_VIBCH</name>
<dbReference type="EC" id="1.4.3.5" evidence="1"/>
<dbReference type="EMBL" id="AE003853">
    <property type="protein sequence ID" value="AAF96972.1"/>
    <property type="molecule type" value="Genomic_DNA"/>
</dbReference>
<dbReference type="PIR" id="C82381">
    <property type="entry name" value="C82381"/>
</dbReference>
<dbReference type="RefSeq" id="NP_233460.1">
    <property type="nucleotide sequence ID" value="NC_002506.1"/>
</dbReference>
<dbReference type="RefSeq" id="WP_000365910.1">
    <property type="nucleotide sequence ID" value="NZ_LT906615.1"/>
</dbReference>
<dbReference type="SMR" id="Q9KKM4"/>
<dbReference type="STRING" id="243277.VC_A1079"/>
<dbReference type="DNASU" id="2611970"/>
<dbReference type="EnsemblBacteria" id="AAF96972">
    <property type="protein sequence ID" value="AAF96972"/>
    <property type="gene ID" value="VC_A1079"/>
</dbReference>
<dbReference type="GeneID" id="89512053"/>
<dbReference type="KEGG" id="vch:VC_A1079"/>
<dbReference type="PATRIC" id="fig|243277.26.peg.3684"/>
<dbReference type="eggNOG" id="COG0259">
    <property type="taxonomic scope" value="Bacteria"/>
</dbReference>
<dbReference type="HOGENOM" id="CLU_032263_2_2_6"/>
<dbReference type="UniPathway" id="UPA01068">
    <property type="reaction ID" value="UER00304"/>
</dbReference>
<dbReference type="UniPathway" id="UPA01068">
    <property type="reaction ID" value="UER00305"/>
</dbReference>
<dbReference type="Proteomes" id="UP000000584">
    <property type="component" value="Chromosome 2"/>
</dbReference>
<dbReference type="GO" id="GO:0010181">
    <property type="term" value="F:FMN binding"/>
    <property type="evidence" value="ECO:0007669"/>
    <property type="project" value="UniProtKB-UniRule"/>
</dbReference>
<dbReference type="GO" id="GO:0004733">
    <property type="term" value="F:pyridoxamine phosphate oxidase activity"/>
    <property type="evidence" value="ECO:0000318"/>
    <property type="project" value="GO_Central"/>
</dbReference>
<dbReference type="GO" id="GO:0042823">
    <property type="term" value="P:pyridoxal phosphate biosynthetic process"/>
    <property type="evidence" value="ECO:0000318"/>
    <property type="project" value="GO_Central"/>
</dbReference>
<dbReference type="GO" id="GO:0008615">
    <property type="term" value="P:pyridoxine biosynthetic process"/>
    <property type="evidence" value="ECO:0007669"/>
    <property type="project" value="UniProtKB-KW"/>
</dbReference>
<dbReference type="FunFam" id="2.30.110.10:FF:000001">
    <property type="entry name" value="Pyridoxine/pyridoxamine 5'-phosphate oxidase"/>
    <property type="match status" value="1"/>
</dbReference>
<dbReference type="Gene3D" id="2.30.110.10">
    <property type="entry name" value="Electron Transport, Fmn-binding Protein, Chain A"/>
    <property type="match status" value="1"/>
</dbReference>
<dbReference type="HAMAP" id="MF_01629">
    <property type="entry name" value="PdxH"/>
    <property type="match status" value="1"/>
</dbReference>
<dbReference type="InterPro" id="IPR000659">
    <property type="entry name" value="Pyridox_Oxase"/>
</dbReference>
<dbReference type="InterPro" id="IPR019740">
    <property type="entry name" value="Pyridox_Oxase_CS"/>
</dbReference>
<dbReference type="InterPro" id="IPR011576">
    <property type="entry name" value="Pyridox_Oxase_N"/>
</dbReference>
<dbReference type="InterPro" id="IPR019576">
    <property type="entry name" value="Pyridoxamine_oxidase_dimer_C"/>
</dbReference>
<dbReference type="InterPro" id="IPR012349">
    <property type="entry name" value="Split_barrel_FMN-bd"/>
</dbReference>
<dbReference type="NCBIfam" id="TIGR00558">
    <property type="entry name" value="pdxH"/>
    <property type="match status" value="1"/>
</dbReference>
<dbReference type="NCBIfam" id="NF004231">
    <property type="entry name" value="PRK05679.1"/>
    <property type="match status" value="1"/>
</dbReference>
<dbReference type="PANTHER" id="PTHR10851:SF0">
    <property type="entry name" value="PYRIDOXINE-5'-PHOSPHATE OXIDASE"/>
    <property type="match status" value="1"/>
</dbReference>
<dbReference type="PANTHER" id="PTHR10851">
    <property type="entry name" value="PYRIDOXINE-5-PHOSPHATE OXIDASE"/>
    <property type="match status" value="1"/>
</dbReference>
<dbReference type="Pfam" id="PF10590">
    <property type="entry name" value="PNP_phzG_C"/>
    <property type="match status" value="1"/>
</dbReference>
<dbReference type="Pfam" id="PF01243">
    <property type="entry name" value="PNPOx_N"/>
    <property type="match status" value="1"/>
</dbReference>
<dbReference type="PIRSF" id="PIRSF000190">
    <property type="entry name" value="Pyd_amn-ph_oxd"/>
    <property type="match status" value="1"/>
</dbReference>
<dbReference type="SUPFAM" id="SSF50475">
    <property type="entry name" value="FMN-binding split barrel"/>
    <property type="match status" value="1"/>
</dbReference>
<dbReference type="PROSITE" id="PS01064">
    <property type="entry name" value="PYRIDOX_OXIDASE"/>
    <property type="match status" value="1"/>
</dbReference>
<evidence type="ECO:0000255" key="1">
    <source>
        <dbReference type="HAMAP-Rule" id="MF_01629"/>
    </source>
</evidence>
<keyword id="KW-0285">Flavoprotein</keyword>
<keyword id="KW-0288">FMN</keyword>
<keyword id="KW-0560">Oxidoreductase</keyword>
<keyword id="KW-0664">Pyridoxine biosynthesis</keyword>
<keyword id="KW-1185">Reference proteome</keyword>
<organism>
    <name type="scientific">Vibrio cholerae serotype O1 (strain ATCC 39315 / El Tor Inaba N16961)</name>
    <dbReference type="NCBI Taxonomy" id="243277"/>
    <lineage>
        <taxon>Bacteria</taxon>
        <taxon>Pseudomonadati</taxon>
        <taxon>Pseudomonadota</taxon>
        <taxon>Gammaproteobacteria</taxon>
        <taxon>Vibrionales</taxon>
        <taxon>Vibrionaceae</taxon>
        <taxon>Vibrio</taxon>
    </lineage>
</organism>
<feature type="chain" id="PRO_0000167765" description="Pyridoxine/pyridoxamine 5'-phosphate oxidase">
    <location>
        <begin position="1"/>
        <end position="211"/>
    </location>
</feature>
<feature type="binding site" evidence="1">
    <location>
        <begin position="7"/>
        <end position="10"/>
    </location>
    <ligand>
        <name>substrate</name>
    </ligand>
</feature>
<feature type="binding site" evidence="1">
    <location>
        <begin position="60"/>
        <end position="65"/>
    </location>
    <ligand>
        <name>FMN</name>
        <dbReference type="ChEBI" id="CHEBI:58210"/>
    </ligand>
</feature>
<feature type="binding site" evidence="1">
    <location>
        <position position="65"/>
    </location>
    <ligand>
        <name>substrate</name>
    </ligand>
</feature>
<feature type="binding site" evidence="1">
    <location>
        <begin position="75"/>
        <end position="76"/>
    </location>
    <ligand>
        <name>FMN</name>
        <dbReference type="ChEBI" id="CHEBI:58210"/>
    </ligand>
</feature>
<feature type="binding site" evidence="1">
    <location>
        <position position="81"/>
    </location>
    <ligand>
        <name>FMN</name>
        <dbReference type="ChEBI" id="CHEBI:58210"/>
    </ligand>
</feature>
<feature type="binding site" evidence="1">
    <location>
        <position position="82"/>
    </location>
    <ligand>
        <name>FMN</name>
        <dbReference type="ChEBI" id="CHEBI:58210"/>
    </ligand>
</feature>
<feature type="binding site" evidence="1">
    <location>
        <position position="104"/>
    </location>
    <ligand>
        <name>FMN</name>
        <dbReference type="ChEBI" id="CHEBI:58210"/>
    </ligand>
</feature>
<feature type="binding site" evidence="1">
    <location>
        <position position="122"/>
    </location>
    <ligand>
        <name>substrate</name>
    </ligand>
</feature>
<feature type="binding site" evidence="1">
    <location>
        <position position="126"/>
    </location>
    <ligand>
        <name>substrate</name>
    </ligand>
</feature>
<feature type="binding site" evidence="1">
    <location>
        <position position="130"/>
    </location>
    <ligand>
        <name>substrate</name>
    </ligand>
</feature>
<feature type="binding site" evidence="1">
    <location>
        <begin position="139"/>
        <end position="140"/>
    </location>
    <ligand>
        <name>FMN</name>
        <dbReference type="ChEBI" id="CHEBI:58210"/>
    </ligand>
</feature>
<feature type="binding site" evidence="1">
    <location>
        <position position="184"/>
    </location>
    <ligand>
        <name>FMN</name>
        <dbReference type="ChEBI" id="CHEBI:58210"/>
    </ligand>
</feature>
<feature type="binding site" evidence="1">
    <location>
        <begin position="190"/>
        <end position="192"/>
    </location>
    <ligand>
        <name>substrate</name>
    </ligand>
</feature>
<feature type="binding site" evidence="1">
    <location>
        <position position="194"/>
    </location>
    <ligand>
        <name>FMN</name>
        <dbReference type="ChEBI" id="CHEBI:58210"/>
    </ligand>
</feature>
<comment type="function">
    <text evidence="1">Catalyzes the oxidation of either pyridoxine 5'-phosphate (PNP) or pyridoxamine 5'-phosphate (PMP) into pyridoxal 5'-phosphate (PLP).</text>
</comment>
<comment type="catalytic activity">
    <reaction evidence="1">
        <text>pyridoxamine 5'-phosphate + O2 + H2O = pyridoxal 5'-phosphate + H2O2 + NH4(+)</text>
        <dbReference type="Rhea" id="RHEA:15817"/>
        <dbReference type="ChEBI" id="CHEBI:15377"/>
        <dbReference type="ChEBI" id="CHEBI:15379"/>
        <dbReference type="ChEBI" id="CHEBI:16240"/>
        <dbReference type="ChEBI" id="CHEBI:28938"/>
        <dbReference type="ChEBI" id="CHEBI:58451"/>
        <dbReference type="ChEBI" id="CHEBI:597326"/>
        <dbReference type="EC" id="1.4.3.5"/>
    </reaction>
</comment>
<comment type="catalytic activity">
    <reaction evidence="1">
        <text>pyridoxine 5'-phosphate + O2 = pyridoxal 5'-phosphate + H2O2</text>
        <dbReference type="Rhea" id="RHEA:15149"/>
        <dbReference type="ChEBI" id="CHEBI:15379"/>
        <dbReference type="ChEBI" id="CHEBI:16240"/>
        <dbReference type="ChEBI" id="CHEBI:58589"/>
        <dbReference type="ChEBI" id="CHEBI:597326"/>
        <dbReference type="EC" id="1.4.3.5"/>
    </reaction>
</comment>
<comment type="cofactor">
    <cofactor evidence="1">
        <name>FMN</name>
        <dbReference type="ChEBI" id="CHEBI:58210"/>
    </cofactor>
    <text evidence="1">Binds 1 FMN per subunit.</text>
</comment>
<comment type="pathway">
    <text evidence="1">Cofactor metabolism; pyridoxal 5'-phosphate salvage; pyridoxal 5'-phosphate from pyridoxamine 5'-phosphate: step 1/1.</text>
</comment>
<comment type="pathway">
    <text evidence="1">Cofactor metabolism; pyridoxal 5'-phosphate salvage; pyridoxal 5'-phosphate from pyridoxine 5'-phosphate: step 1/1.</text>
</comment>
<comment type="subunit">
    <text evidence="1">Homodimer.</text>
</comment>
<comment type="similarity">
    <text evidence="1">Belongs to the pyridoxamine 5'-phosphate oxidase family.</text>
</comment>
<reference key="1">
    <citation type="journal article" date="2000" name="Nature">
        <title>DNA sequence of both chromosomes of the cholera pathogen Vibrio cholerae.</title>
        <authorList>
            <person name="Heidelberg J.F."/>
            <person name="Eisen J.A."/>
            <person name="Nelson W.C."/>
            <person name="Clayton R.A."/>
            <person name="Gwinn M.L."/>
            <person name="Dodson R.J."/>
            <person name="Haft D.H."/>
            <person name="Hickey E.K."/>
            <person name="Peterson J.D."/>
            <person name="Umayam L.A."/>
            <person name="Gill S.R."/>
            <person name="Nelson K.E."/>
            <person name="Read T.D."/>
            <person name="Tettelin H."/>
            <person name="Richardson D.L."/>
            <person name="Ermolaeva M.D."/>
            <person name="Vamathevan J.J."/>
            <person name="Bass S."/>
            <person name="Qin H."/>
            <person name="Dragoi I."/>
            <person name="Sellers P."/>
            <person name="McDonald L.A."/>
            <person name="Utterback T.R."/>
            <person name="Fleischmann R.D."/>
            <person name="Nierman W.C."/>
            <person name="White O."/>
            <person name="Salzberg S.L."/>
            <person name="Smith H.O."/>
            <person name="Colwell R.R."/>
            <person name="Mekalanos J.J."/>
            <person name="Venter J.C."/>
            <person name="Fraser C.M."/>
        </authorList>
    </citation>
    <scope>NUCLEOTIDE SEQUENCE [LARGE SCALE GENOMIC DNA]</scope>
    <source>
        <strain>ATCC 39315 / El Tor Inaba N16961</strain>
    </source>
</reference>
<proteinExistence type="inferred from homology"/>
<sequence>MDLSDIRREYIHGGLRRKDLQANPIDQFNLWLQQAIDANLSDPTAMTVATVDEHGQPFQRIVLLKNVDDAGFVFYTNLGSRKAQHIAHNNKISLHFPWHPLERQVHITGVAEKLTAMENMKYFMSRPKESQIAAIASHQSSRISARGVLEGKYLELKQKFANGEIPVPSFWGGYRIRPESLEFWQGGEHRLHDRFLYSRQDDNWTVDRLAP</sequence>
<protein>
    <recommendedName>
        <fullName evidence="1">Pyridoxine/pyridoxamine 5'-phosphate oxidase</fullName>
        <ecNumber evidence="1">1.4.3.5</ecNumber>
    </recommendedName>
    <alternativeName>
        <fullName evidence="1">PNP/PMP oxidase</fullName>
        <shortName evidence="1">PNPOx</shortName>
    </alternativeName>
    <alternativeName>
        <fullName evidence="1">Pyridoxal 5'-phosphate synthase</fullName>
    </alternativeName>
</protein>
<accession>Q9KKM4</accession>